<dbReference type="EMBL" id="AF401585">
    <property type="protein sequence ID" value="AAK95157.1"/>
    <property type="molecule type" value="mRNA"/>
</dbReference>
<dbReference type="RefSeq" id="NP_001187055.1">
    <property type="nucleotide sequence ID" value="NM_001200126.2"/>
</dbReference>
<dbReference type="SMR" id="P58372"/>
<dbReference type="STRING" id="7998.ENSIPUP00000002493"/>
<dbReference type="GeneID" id="100304544"/>
<dbReference type="KEGG" id="ipu:100304544"/>
<dbReference type="CTD" id="6156"/>
<dbReference type="OrthoDB" id="1928736at2759"/>
<dbReference type="Proteomes" id="UP000221080">
    <property type="component" value="Chromosome 24"/>
</dbReference>
<dbReference type="GO" id="GO:0022625">
    <property type="term" value="C:cytosolic large ribosomal subunit"/>
    <property type="evidence" value="ECO:0007669"/>
    <property type="project" value="InterPro"/>
</dbReference>
<dbReference type="GO" id="GO:0003723">
    <property type="term" value="F:RNA binding"/>
    <property type="evidence" value="ECO:0007669"/>
    <property type="project" value="InterPro"/>
</dbReference>
<dbReference type="GO" id="GO:0003735">
    <property type="term" value="F:structural constituent of ribosome"/>
    <property type="evidence" value="ECO:0007669"/>
    <property type="project" value="InterPro"/>
</dbReference>
<dbReference type="FunFam" id="3.30.1330.30:FF:000001">
    <property type="entry name" value="60S ribosomal protein L30"/>
    <property type="match status" value="1"/>
</dbReference>
<dbReference type="Gene3D" id="3.30.1330.30">
    <property type="match status" value="1"/>
</dbReference>
<dbReference type="HAMAP" id="MF_00481">
    <property type="entry name" value="Ribosomal_eL30"/>
    <property type="match status" value="1"/>
</dbReference>
<dbReference type="InterPro" id="IPR000231">
    <property type="entry name" value="Ribosomal_eL30"/>
</dbReference>
<dbReference type="InterPro" id="IPR039109">
    <property type="entry name" value="Ribosomal_eL30-like"/>
</dbReference>
<dbReference type="InterPro" id="IPR029064">
    <property type="entry name" value="Ribosomal_eL30-like_sf"/>
</dbReference>
<dbReference type="InterPro" id="IPR022991">
    <property type="entry name" value="Ribosomal_eL30_CS"/>
</dbReference>
<dbReference type="InterPro" id="IPR004038">
    <property type="entry name" value="Ribosomal_eL8/eL30/eS12/Gad45"/>
</dbReference>
<dbReference type="NCBIfam" id="NF002172">
    <property type="entry name" value="PRK01018.1"/>
    <property type="match status" value="1"/>
</dbReference>
<dbReference type="PANTHER" id="PTHR11449">
    <property type="entry name" value="RIBOSOMAL PROTEIN L30"/>
    <property type="match status" value="1"/>
</dbReference>
<dbReference type="Pfam" id="PF01248">
    <property type="entry name" value="Ribosomal_L7Ae"/>
    <property type="match status" value="1"/>
</dbReference>
<dbReference type="SUPFAM" id="SSF55315">
    <property type="entry name" value="L30e-like"/>
    <property type="match status" value="1"/>
</dbReference>
<dbReference type="PROSITE" id="PS00709">
    <property type="entry name" value="RIBOSOMAL_L30E_1"/>
    <property type="match status" value="1"/>
</dbReference>
<dbReference type="PROSITE" id="PS00993">
    <property type="entry name" value="RIBOSOMAL_L30E_2"/>
    <property type="match status" value="1"/>
</dbReference>
<protein>
    <recommendedName>
        <fullName evidence="2">Large ribosomal subunit protein eL30</fullName>
    </recommendedName>
    <alternativeName>
        <fullName>60S ribosomal protein L30</fullName>
    </alternativeName>
</protein>
<proteinExistence type="inferred from homology"/>
<keyword id="KW-0963">Cytoplasm</keyword>
<keyword id="KW-0687">Ribonucleoprotein</keyword>
<keyword id="KW-0689">Ribosomal protein</keyword>
<gene>
    <name type="primary">rpl30</name>
</gene>
<reference key="1">
    <citation type="journal article" date="2003" name="Gene">
        <title>Translational machinery of channel catfish: II. Complementary DNA and expression of the complete set of 47 60S ribosomal proteins.</title>
        <authorList>
            <person name="Patterson A.P."/>
            <person name="Karsi A."/>
            <person name="Feng J."/>
            <person name="Liu Z.J."/>
        </authorList>
    </citation>
    <scope>NUCLEOTIDE SEQUENCE [MRNA]</scope>
</reference>
<organism>
    <name type="scientific">Ictalurus punctatus</name>
    <name type="common">Channel catfish</name>
    <name type="synonym">Silurus punctatus</name>
    <dbReference type="NCBI Taxonomy" id="7998"/>
    <lineage>
        <taxon>Eukaryota</taxon>
        <taxon>Metazoa</taxon>
        <taxon>Chordata</taxon>
        <taxon>Craniata</taxon>
        <taxon>Vertebrata</taxon>
        <taxon>Euteleostomi</taxon>
        <taxon>Actinopterygii</taxon>
        <taxon>Neopterygii</taxon>
        <taxon>Teleostei</taxon>
        <taxon>Ostariophysi</taxon>
        <taxon>Siluriformes</taxon>
        <taxon>Ictaluridae</taxon>
        <taxon>Ictalurus</taxon>
    </lineage>
</organism>
<sequence length="116" mass="12942">MVAAKKTKKSLESINSRLQLVMKSGKYVLGYKQSQKMIRQGKAKLVILANNCPALRKSEIEYYAMLSKTGVHHYSGNNIELGTACGKYYRVCTLAIIDPGDSDIIRSMPDQQQGEK</sequence>
<name>RL30_ICTPU</name>
<evidence type="ECO:0000250" key="1">
    <source>
        <dbReference type="UniProtKB" id="P62888"/>
    </source>
</evidence>
<evidence type="ECO:0000305" key="2"/>
<accession>P58372</accession>
<feature type="chain" id="PRO_0000146126" description="Large ribosomal subunit protein eL30">
    <location>
        <begin position="1"/>
        <end position="116"/>
    </location>
</feature>
<comment type="function">
    <text evidence="1">Component of the large ribosomal subunit. The ribosome is a large ribonucleoprotein complex responsible for the synthesis of proteins in the cell.</text>
</comment>
<comment type="subunit">
    <text evidence="1">Component of the large ribosomal subunit.</text>
</comment>
<comment type="subcellular location">
    <subcellularLocation>
        <location evidence="1">Cytoplasm</location>
    </subcellularLocation>
</comment>
<comment type="similarity">
    <text evidence="2">Belongs to the eukaryotic ribosomal protein eL30 family.</text>
</comment>